<reference key="1">
    <citation type="journal article" date="2000" name="Biochim. Biophys. Acta">
        <title>L-glutamate dehydrogenase from the antarctic fish Chaenocephalus aceratus. Primary structure, function and thermodynamic characterisation: relationship with cold adaptation.</title>
        <authorList>
            <person name="Ciardiello M.A."/>
            <person name="Camardella L."/>
            <person name="Carratore V."/>
            <person name="di Prisco G."/>
        </authorList>
    </citation>
    <scope>PROTEIN SEQUENCE</scope>
    <source>
        <tissue>Liver</tissue>
    </source>
</reference>
<sequence length="504" mass="55394">ADAADKPDDPNFFRMVEGFFDRGASIVEDKLVEDLRTKETPEQKKGRVAGILRIIKPCNHVLSLSFPIKRDNGEWEVIEGYRAQHSQHRTPCKGGIRYSMDVSVDEVKALASLMTYKCAVVDVPFGGAKAGVRINTKNYSDNELEKITRRFTIELAKKGFIGPGIDVPAPDMSTGEREMSWIADTYANTIAHTDINAHACVTGKPISQGGIHGRISATGRGVFHGIENFMNEASYMSMVGLTPGVQDKTFVIQGFGNVGLHSMRYLHRFGAKCVGIGEIDGAIYNADGIDPKALEEYKLQNGTIVGFPGAKPYEGSILEADCDILIPAAGEKQLTRNNARRIKAKIIAEGANGPTTPDADKIFLENNVMVIPDMYLNAGGVTVSYFEWLKNLNHVSYGRLTFKYERDSNYHLLMSVQESLERKFGKQGGPIPVVPTADFQARVAGASEKDIVHSGLAYTMERSARQIMRTASKHNLGLDIRTAAYVNAIEKVFKVYNEAGLTFT</sequence>
<keyword id="KW-0067">ATP-binding</keyword>
<keyword id="KW-0903">Direct protein sequencing</keyword>
<keyword id="KW-0342">GTP-binding</keyword>
<keyword id="KW-0496">Mitochondrion</keyword>
<keyword id="KW-0520">NAD</keyword>
<keyword id="KW-0547">Nucleotide-binding</keyword>
<keyword id="KW-0560">Oxidoreductase</keyword>
<organism>
    <name type="scientific">Chaenocephalus aceratus</name>
    <name type="common">Blackfin icefish</name>
    <name type="synonym">Chaenichthys aceratus</name>
    <dbReference type="NCBI Taxonomy" id="36190"/>
    <lineage>
        <taxon>Eukaryota</taxon>
        <taxon>Metazoa</taxon>
        <taxon>Chordata</taxon>
        <taxon>Craniata</taxon>
        <taxon>Vertebrata</taxon>
        <taxon>Euteleostomi</taxon>
        <taxon>Actinopterygii</taxon>
        <taxon>Neopterygii</taxon>
        <taxon>Teleostei</taxon>
        <taxon>Neoteleostei</taxon>
        <taxon>Acanthomorphata</taxon>
        <taxon>Eupercaria</taxon>
        <taxon>Perciformes</taxon>
        <taxon>Notothenioidei</taxon>
        <taxon>Channichthyidae</taxon>
        <taxon>Chaenocephalus</taxon>
    </lineage>
</organism>
<proteinExistence type="evidence at protein level"/>
<comment type="function">
    <text evidence="1">Mitochondrial glutamate dehydrogenase that converts L-glutamate into alpha-ketoglutarate. Plays a key role in glutamine anaplerosis by producing alpha-ketoglutarate, an important intermediate in the tricarboxylic acid cycle (By similarity).</text>
</comment>
<comment type="catalytic activity">
    <reaction>
        <text>L-glutamate + NAD(+) + H2O = 2-oxoglutarate + NH4(+) + NADH + H(+)</text>
        <dbReference type="Rhea" id="RHEA:15133"/>
        <dbReference type="ChEBI" id="CHEBI:15377"/>
        <dbReference type="ChEBI" id="CHEBI:15378"/>
        <dbReference type="ChEBI" id="CHEBI:16810"/>
        <dbReference type="ChEBI" id="CHEBI:28938"/>
        <dbReference type="ChEBI" id="CHEBI:29985"/>
        <dbReference type="ChEBI" id="CHEBI:57540"/>
        <dbReference type="ChEBI" id="CHEBI:57945"/>
        <dbReference type="EC" id="1.4.1.3"/>
    </reaction>
</comment>
<comment type="catalytic activity">
    <reaction>
        <text>L-glutamate + NADP(+) + H2O = 2-oxoglutarate + NH4(+) + NADPH + H(+)</text>
        <dbReference type="Rhea" id="RHEA:11612"/>
        <dbReference type="ChEBI" id="CHEBI:15377"/>
        <dbReference type="ChEBI" id="CHEBI:15378"/>
        <dbReference type="ChEBI" id="CHEBI:16810"/>
        <dbReference type="ChEBI" id="CHEBI:28938"/>
        <dbReference type="ChEBI" id="CHEBI:29985"/>
        <dbReference type="ChEBI" id="CHEBI:57783"/>
        <dbReference type="ChEBI" id="CHEBI:58349"/>
        <dbReference type="EC" id="1.4.1.3"/>
    </reaction>
</comment>
<comment type="activity regulation">
    <text evidence="1">Subject to allosteric regulation. Activated by ADP. Inhibited by GTP and ATP (By similarity).</text>
</comment>
<comment type="biophysicochemical properties">
    <phDependence>
        <text>Optimum pH is 8.0.</text>
    </phDependence>
    <temperatureDependence>
        <text>Optimum temperature is 30 degrees Celsius.</text>
    </temperatureDependence>
</comment>
<comment type="subunit">
    <text>Homohexamer.</text>
</comment>
<comment type="subcellular location">
    <subcellularLocation>
        <location>Mitochondrion matrix</location>
    </subcellularLocation>
</comment>
<comment type="miscellaneous">
    <text evidence="1">ADP can occupy the NADH binding site and activate the enzyme.</text>
</comment>
<comment type="similarity">
    <text evidence="2">Belongs to the Glu/Leu/Phe/Val dehydrogenases family.</text>
</comment>
<dbReference type="EC" id="1.4.1.3"/>
<dbReference type="SMR" id="P82264"/>
<dbReference type="GO" id="GO:0005759">
    <property type="term" value="C:mitochondrial matrix"/>
    <property type="evidence" value="ECO:0007669"/>
    <property type="project" value="UniProtKB-SubCell"/>
</dbReference>
<dbReference type="GO" id="GO:0005524">
    <property type="term" value="F:ATP binding"/>
    <property type="evidence" value="ECO:0007669"/>
    <property type="project" value="UniProtKB-KW"/>
</dbReference>
<dbReference type="GO" id="GO:0004352">
    <property type="term" value="F:glutamate dehydrogenase (NAD+) activity"/>
    <property type="evidence" value="ECO:0007669"/>
    <property type="project" value="RHEA"/>
</dbReference>
<dbReference type="GO" id="GO:0004354">
    <property type="term" value="F:glutamate dehydrogenase (NADP+) activity"/>
    <property type="evidence" value="ECO:0007669"/>
    <property type="project" value="RHEA"/>
</dbReference>
<dbReference type="GO" id="GO:0004353">
    <property type="term" value="F:glutamate dehydrogenase [NAD(P)+] activity"/>
    <property type="evidence" value="ECO:0000250"/>
    <property type="project" value="UniProtKB"/>
</dbReference>
<dbReference type="GO" id="GO:0005525">
    <property type="term" value="F:GTP binding"/>
    <property type="evidence" value="ECO:0007669"/>
    <property type="project" value="UniProtKB-KW"/>
</dbReference>
<dbReference type="GO" id="GO:0006538">
    <property type="term" value="P:glutamate catabolic process"/>
    <property type="evidence" value="ECO:0007669"/>
    <property type="project" value="TreeGrafter"/>
</dbReference>
<dbReference type="GO" id="GO:0006541">
    <property type="term" value="P:glutamine metabolic process"/>
    <property type="evidence" value="ECO:0000250"/>
    <property type="project" value="UniProtKB"/>
</dbReference>
<dbReference type="GO" id="GO:0072350">
    <property type="term" value="P:tricarboxylic acid metabolic process"/>
    <property type="evidence" value="ECO:0000250"/>
    <property type="project" value="UniProtKB"/>
</dbReference>
<dbReference type="CDD" id="cd01076">
    <property type="entry name" value="NAD_bind_1_Glu_DH"/>
    <property type="match status" value="1"/>
</dbReference>
<dbReference type="FunFam" id="1.10.287.140:FF:000001">
    <property type="entry name" value="Glutamate dehydrogenase 1, mitochondrial"/>
    <property type="match status" value="1"/>
</dbReference>
<dbReference type="FunFam" id="3.40.50.10860:FF:000007">
    <property type="entry name" value="Glutamate dehydrogenase 1, mitochondrial"/>
    <property type="match status" value="1"/>
</dbReference>
<dbReference type="FunFam" id="3.40.50.720:FF:000100">
    <property type="entry name" value="Glutamate dehydrogenase 1, mitochondrial"/>
    <property type="match status" value="1"/>
</dbReference>
<dbReference type="Gene3D" id="1.10.287.140">
    <property type="match status" value="1"/>
</dbReference>
<dbReference type="Gene3D" id="3.40.50.10860">
    <property type="entry name" value="Leucine Dehydrogenase, chain A, domain 1"/>
    <property type="match status" value="1"/>
</dbReference>
<dbReference type="Gene3D" id="3.40.50.720">
    <property type="entry name" value="NAD(P)-binding Rossmann-like Domain"/>
    <property type="match status" value="1"/>
</dbReference>
<dbReference type="InterPro" id="IPR046346">
    <property type="entry name" value="Aminoacid_DH-like_N_sf"/>
</dbReference>
<dbReference type="InterPro" id="IPR006095">
    <property type="entry name" value="Glu/Leu/Phe/Val/Trp_DH"/>
</dbReference>
<dbReference type="InterPro" id="IPR006096">
    <property type="entry name" value="Glu/Leu/Phe/Val/Trp_DH_C"/>
</dbReference>
<dbReference type="InterPro" id="IPR006097">
    <property type="entry name" value="Glu/Leu/Phe/Val/Trp_DH_dimer"/>
</dbReference>
<dbReference type="InterPro" id="IPR014362">
    <property type="entry name" value="Glu_DH"/>
</dbReference>
<dbReference type="InterPro" id="IPR036291">
    <property type="entry name" value="NAD(P)-bd_dom_sf"/>
</dbReference>
<dbReference type="InterPro" id="IPR033922">
    <property type="entry name" value="NAD_bind_Glu_DH"/>
</dbReference>
<dbReference type="PANTHER" id="PTHR11606">
    <property type="entry name" value="GLUTAMATE DEHYDROGENASE"/>
    <property type="match status" value="1"/>
</dbReference>
<dbReference type="PANTHER" id="PTHR11606:SF33">
    <property type="entry name" value="GLUTAMATE DEHYDROGENASE [NAD(P)(+)]"/>
    <property type="match status" value="1"/>
</dbReference>
<dbReference type="Pfam" id="PF00208">
    <property type="entry name" value="ELFV_dehydrog"/>
    <property type="match status" value="1"/>
</dbReference>
<dbReference type="Pfam" id="PF02812">
    <property type="entry name" value="ELFV_dehydrog_N"/>
    <property type="match status" value="1"/>
</dbReference>
<dbReference type="PIRSF" id="PIRSF000185">
    <property type="entry name" value="Glu_DH"/>
    <property type="match status" value="1"/>
</dbReference>
<dbReference type="PRINTS" id="PR00082">
    <property type="entry name" value="GLFDHDRGNASE"/>
</dbReference>
<dbReference type="SMART" id="SM00839">
    <property type="entry name" value="ELFV_dehydrog"/>
    <property type="match status" value="1"/>
</dbReference>
<dbReference type="SUPFAM" id="SSF53223">
    <property type="entry name" value="Aminoacid dehydrogenase-like, N-terminal domain"/>
    <property type="match status" value="1"/>
</dbReference>
<dbReference type="SUPFAM" id="SSF51735">
    <property type="entry name" value="NAD(P)-binding Rossmann-fold domains"/>
    <property type="match status" value="1"/>
</dbReference>
<evidence type="ECO:0000250" key="1"/>
<evidence type="ECO:0000305" key="2"/>
<accession>P82264</accession>
<gene>
    <name type="primary">glud1</name>
    <name type="synonym">glud</name>
</gene>
<protein>
    <recommendedName>
        <fullName>Glutamate dehydrogenase, mitochondrial</fullName>
        <shortName>GDH</shortName>
        <ecNumber>1.4.1.3</ecNumber>
    </recommendedName>
</protein>
<name>DHE3_CHAAC</name>
<feature type="chain" id="PRO_0000182743" description="Glutamate dehydrogenase, mitochondrial">
    <location>
        <begin position="1"/>
        <end position="504"/>
    </location>
</feature>
<feature type="active site" evidence="1">
    <location>
        <position position="129"/>
    </location>
</feature>
<feature type="binding site" evidence="1">
    <location>
        <begin position="87"/>
        <end position="89"/>
    </location>
    <ligand>
        <name>NAD(+)</name>
        <dbReference type="ChEBI" id="CHEBI:57540"/>
    </ligand>
</feature>
<feature type="binding site" evidence="1">
    <location>
        <position position="93"/>
    </location>
    <ligand>
        <name>substrate</name>
    </ligand>
</feature>
<feature type="binding site" evidence="1">
    <location>
        <position position="117"/>
    </location>
    <ligand>
        <name>substrate</name>
    </ligand>
</feature>
<feature type="binding site" evidence="1">
    <location>
        <position position="122"/>
    </location>
    <ligand>
        <name>NAD(+)</name>
        <dbReference type="ChEBI" id="CHEBI:57540"/>
    </ligand>
</feature>
<feature type="binding site" evidence="1">
    <location>
        <position position="198"/>
    </location>
    <ligand>
        <name>NAD(+)</name>
        <dbReference type="ChEBI" id="CHEBI:57540"/>
    </ligand>
</feature>
<feature type="binding site" evidence="1">
    <location>
        <position position="212"/>
    </location>
    <ligand>
        <name>GTP</name>
        <dbReference type="ChEBI" id="CHEBI:37565"/>
    </ligand>
</feature>
<feature type="binding site" evidence="1">
    <location>
        <position position="216"/>
    </location>
    <ligand>
        <name>GTP</name>
        <dbReference type="ChEBI" id="CHEBI:37565"/>
    </ligand>
</feature>
<feature type="binding site" evidence="1">
    <location>
        <position position="265"/>
    </location>
    <ligand>
        <name>GTP</name>
        <dbReference type="ChEBI" id="CHEBI:37565"/>
    </ligand>
</feature>
<feature type="binding site" evidence="1">
    <location>
        <position position="268"/>
    </location>
    <ligand>
        <name>GTP</name>
        <dbReference type="ChEBI" id="CHEBI:37565"/>
    </ligand>
</feature>
<feature type="binding site" evidence="1">
    <location>
        <position position="384"/>
    </location>
    <ligand>
        <name>substrate</name>
    </ligand>
</feature>
<feature type="binding site" evidence="1">
    <location>
        <position position="390"/>
    </location>
    <ligand>
        <name>NAD(+)</name>
        <dbReference type="ChEBI" id="CHEBI:57540"/>
    </ligand>
</feature>
<feature type="binding site" evidence="1">
    <location>
        <position position="396"/>
    </location>
    <ligand>
        <name>ADP</name>
        <dbReference type="ChEBI" id="CHEBI:456216"/>
    </ligand>
</feature>
<feature type="binding site" evidence="1">
    <location>
        <position position="462"/>
    </location>
    <ligand>
        <name>ADP</name>
        <dbReference type="ChEBI" id="CHEBI:456216"/>
    </ligand>
</feature>